<proteinExistence type="evidence at protein level"/>
<comment type="function">
    <text evidence="1">Subunit of the 11S REG (also called PA28) proteasome regulator, a doughnut-shaped homoheptamer which associates with the proteasome. 11S REG-gamma activates preferentially the trypsin-like catalytic subunit of the proteasome. May also be involved in cell cycle regulation.</text>
</comment>
<comment type="subunit">
    <text evidence="1">Homoheptamer. The homoheptamer associates with the 20S proteasome.</text>
</comment>
<comment type="subcellular location">
    <subcellularLocation>
        <location evidence="1">Nucleus</location>
    </subcellularLocation>
</comment>
<comment type="similarity">
    <text evidence="2">Belongs to the PA28 family.</text>
</comment>
<protein>
    <recommendedName>
        <fullName>Proteasome activator 28</fullName>
    </recommendedName>
    <alternativeName>
        <fullName>PA28 homolog</fullName>
    </alternativeName>
</protein>
<organism>
    <name type="scientific">Dictyostelium discoideum</name>
    <name type="common">Social amoeba</name>
    <dbReference type="NCBI Taxonomy" id="44689"/>
    <lineage>
        <taxon>Eukaryota</taxon>
        <taxon>Amoebozoa</taxon>
        <taxon>Evosea</taxon>
        <taxon>Eumycetozoa</taxon>
        <taxon>Dictyostelia</taxon>
        <taxon>Dictyosteliales</taxon>
        <taxon>Dictyosteliaceae</taxon>
        <taxon>Dictyostelium</taxon>
    </lineage>
</organism>
<accession>Q967U1</accession>
<accession>Q54NN9</accession>
<sequence length="225" mass="26226">MSKNNSTVIKMDEQVLKYKEDLYEKTVHHLKVTIPKKIAEYQELAKSYGQNSENEQDGQTSKKRKLDSEDYVLMPIEDLIKTNRVIMETHQKFKKAYIELIETFSVIRGWISLNIPRIEDGNNFGVDVQEDIITQITKLEEVYTSLLDGSESYFASRASLVKKILKHKDIEAYRYSLAQVDEKEFTRFSFSYFDLANNYATTYSLIVKNFAKLETPRPTNASNIY</sequence>
<reference key="1">
    <citation type="journal article" date="2009" name="Eukaryot. Cell">
        <title>Characterization of a REG/PA28 proteasome activator homolog in Dictyostelium discoideum indicates that the ubiquitin- and ATP-independent REGgamma proteasome is an ancient nuclear protease.</title>
        <authorList>
            <person name="Masson P."/>
            <person name="Lundin D."/>
            <person name="Soederbom F."/>
            <person name="Young P."/>
        </authorList>
    </citation>
    <scope>NUCLEOTIDE SEQUENCE [MRNA]</scope>
    <scope>FUNCTION</scope>
    <scope>SUBUNIT</scope>
    <scope>ASSOCIATION WITH THE 20S PROTEASOME</scope>
    <scope>SUBCELLULAR LOCATION</scope>
</reference>
<reference key="2">
    <citation type="journal article" date="2005" name="Nature">
        <title>The genome of the social amoeba Dictyostelium discoideum.</title>
        <authorList>
            <person name="Eichinger L."/>
            <person name="Pachebat J.A."/>
            <person name="Gloeckner G."/>
            <person name="Rajandream M.A."/>
            <person name="Sucgang R."/>
            <person name="Berriman M."/>
            <person name="Song J."/>
            <person name="Olsen R."/>
            <person name="Szafranski K."/>
            <person name="Xu Q."/>
            <person name="Tunggal B."/>
            <person name="Kummerfeld S."/>
            <person name="Madera M."/>
            <person name="Konfortov B.A."/>
            <person name="Rivero F."/>
            <person name="Bankier A.T."/>
            <person name="Lehmann R."/>
            <person name="Hamlin N."/>
            <person name="Davies R."/>
            <person name="Gaudet P."/>
            <person name="Fey P."/>
            <person name="Pilcher K."/>
            <person name="Chen G."/>
            <person name="Saunders D."/>
            <person name="Sodergren E.J."/>
            <person name="Davis P."/>
            <person name="Kerhornou A."/>
            <person name="Nie X."/>
            <person name="Hall N."/>
            <person name="Anjard C."/>
            <person name="Hemphill L."/>
            <person name="Bason N."/>
            <person name="Farbrother P."/>
            <person name="Desany B."/>
            <person name="Just E."/>
            <person name="Morio T."/>
            <person name="Rost R."/>
            <person name="Churcher C.M."/>
            <person name="Cooper J."/>
            <person name="Haydock S."/>
            <person name="van Driessche N."/>
            <person name="Cronin A."/>
            <person name="Goodhead I."/>
            <person name="Muzny D.M."/>
            <person name="Mourier T."/>
            <person name="Pain A."/>
            <person name="Lu M."/>
            <person name="Harper D."/>
            <person name="Lindsay R."/>
            <person name="Hauser H."/>
            <person name="James K.D."/>
            <person name="Quiles M."/>
            <person name="Madan Babu M."/>
            <person name="Saito T."/>
            <person name="Buchrieser C."/>
            <person name="Wardroper A."/>
            <person name="Felder M."/>
            <person name="Thangavelu M."/>
            <person name="Johnson D."/>
            <person name="Knights A."/>
            <person name="Loulseged H."/>
            <person name="Mungall K.L."/>
            <person name="Oliver K."/>
            <person name="Price C."/>
            <person name="Quail M.A."/>
            <person name="Urushihara H."/>
            <person name="Hernandez J."/>
            <person name="Rabbinowitsch E."/>
            <person name="Steffen D."/>
            <person name="Sanders M."/>
            <person name="Ma J."/>
            <person name="Kohara Y."/>
            <person name="Sharp S."/>
            <person name="Simmonds M.N."/>
            <person name="Spiegler S."/>
            <person name="Tivey A."/>
            <person name="Sugano S."/>
            <person name="White B."/>
            <person name="Walker D."/>
            <person name="Woodward J.R."/>
            <person name="Winckler T."/>
            <person name="Tanaka Y."/>
            <person name="Shaulsky G."/>
            <person name="Schleicher M."/>
            <person name="Weinstock G.M."/>
            <person name="Rosenthal A."/>
            <person name="Cox E.C."/>
            <person name="Chisholm R.L."/>
            <person name="Gibbs R.A."/>
            <person name="Loomis W.F."/>
            <person name="Platzer M."/>
            <person name="Kay R.R."/>
            <person name="Williams J.G."/>
            <person name="Dear P.H."/>
            <person name="Noegel A.A."/>
            <person name="Barrell B.G."/>
            <person name="Kuspa A."/>
        </authorList>
    </citation>
    <scope>NUCLEOTIDE SEQUENCE [LARGE SCALE GENOMIC DNA]</scope>
    <source>
        <strain>AX4</strain>
    </source>
</reference>
<gene>
    <name type="primary">psmE3</name>
    <name type="synonym">dpr1</name>
    <name type="ORF">DDB_G0285099</name>
</gene>
<name>PSME_DICDI</name>
<evidence type="ECO:0000269" key="1">
    <source>
    </source>
</evidence>
<evidence type="ECO:0000305" key="2"/>
<keyword id="KW-0539">Nucleus</keyword>
<keyword id="KW-0647">Proteasome</keyword>
<keyword id="KW-1185">Reference proteome</keyword>
<dbReference type="EMBL" id="AF363616">
    <property type="protein sequence ID" value="AAK39562.1"/>
    <property type="molecule type" value="mRNA"/>
</dbReference>
<dbReference type="EMBL" id="AAFI02000074">
    <property type="protein sequence ID" value="EAL64862.1"/>
    <property type="molecule type" value="Genomic_DNA"/>
</dbReference>
<dbReference type="RefSeq" id="XP_639877.1">
    <property type="nucleotide sequence ID" value="XM_634785.1"/>
</dbReference>
<dbReference type="SMR" id="Q967U1"/>
<dbReference type="FunCoup" id="Q967U1">
    <property type="interactions" value="307"/>
</dbReference>
<dbReference type="STRING" id="44689.Q967U1"/>
<dbReference type="PaxDb" id="44689-DDB0191141"/>
<dbReference type="EnsemblProtists" id="EAL64862">
    <property type="protein sequence ID" value="EAL64862"/>
    <property type="gene ID" value="DDB_G0285099"/>
</dbReference>
<dbReference type="GeneID" id="8624948"/>
<dbReference type="KEGG" id="ddi:DDB_G0285099"/>
<dbReference type="dictyBase" id="DDB_G0285099">
    <property type="gene designation" value="psmE3"/>
</dbReference>
<dbReference type="VEuPathDB" id="AmoebaDB:DDB_G0285099"/>
<dbReference type="eggNOG" id="KOG4470">
    <property type="taxonomic scope" value="Eukaryota"/>
</dbReference>
<dbReference type="HOGENOM" id="CLU_062515_1_0_1"/>
<dbReference type="InParanoid" id="Q967U1"/>
<dbReference type="OMA" id="PMFNERN"/>
<dbReference type="PhylomeDB" id="Q967U1"/>
<dbReference type="Reactome" id="R-DDI-9907900">
    <property type="pathway name" value="Proteasome assembly"/>
</dbReference>
<dbReference type="PRO" id="PR:Q967U1"/>
<dbReference type="Proteomes" id="UP000002195">
    <property type="component" value="Chromosome 4"/>
</dbReference>
<dbReference type="GO" id="GO:0005737">
    <property type="term" value="C:cytoplasm"/>
    <property type="evidence" value="ECO:0000318"/>
    <property type="project" value="GO_Central"/>
</dbReference>
<dbReference type="GO" id="GO:0005654">
    <property type="term" value="C:nucleoplasm"/>
    <property type="evidence" value="ECO:0000318"/>
    <property type="project" value="GO_Central"/>
</dbReference>
<dbReference type="GO" id="GO:0005634">
    <property type="term" value="C:nucleus"/>
    <property type="evidence" value="ECO:0000314"/>
    <property type="project" value="dictyBase"/>
</dbReference>
<dbReference type="GO" id="GO:0008537">
    <property type="term" value="C:proteasome activator complex"/>
    <property type="evidence" value="ECO:0007669"/>
    <property type="project" value="InterPro"/>
</dbReference>
<dbReference type="GO" id="GO:0032991">
    <property type="term" value="C:protein-containing complex"/>
    <property type="evidence" value="ECO:0000314"/>
    <property type="project" value="dictyBase"/>
</dbReference>
<dbReference type="GO" id="GO:0061133">
    <property type="term" value="F:endopeptidase activator activity"/>
    <property type="evidence" value="ECO:0000318"/>
    <property type="project" value="GO_Central"/>
</dbReference>
<dbReference type="GO" id="GO:0030163">
    <property type="term" value="P:protein catabolic process"/>
    <property type="evidence" value="ECO:0000314"/>
    <property type="project" value="dictyBase"/>
</dbReference>
<dbReference type="GO" id="GO:2000045">
    <property type="term" value="P:regulation of G1/S transition of mitotic cell cycle"/>
    <property type="evidence" value="ECO:0000318"/>
    <property type="project" value="GO_Central"/>
</dbReference>
<dbReference type="GO" id="GO:0061136">
    <property type="term" value="P:regulation of proteasomal protein catabolic process"/>
    <property type="evidence" value="ECO:0000318"/>
    <property type="project" value="GO_Central"/>
</dbReference>
<dbReference type="FunFam" id="1.20.120.180:FF:000002">
    <property type="entry name" value="Proteasome activator complex subunit 1"/>
    <property type="match status" value="1"/>
</dbReference>
<dbReference type="Gene3D" id="1.20.120.180">
    <property type="entry name" value="Proteasome activator pa28, C-terminal domain"/>
    <property type="match status" value="1"/>
</dbReference>
<dbReference type="InterPro" id="IPR003186">
    <property type="entry name" value="PA28_C"/>
</dbReference>
<dbReference type="InterPro" id="IPR036997">
    <property type="entry name" value="PA28_C_sf"/>
</dbReference>
<dbReference type="InterPro" id="IPR009077">
    <property type="entry name" value="Proteasome_activ_PA28"/>
</dbReference>
<dbReference type="InterPro" id="IPR036252">
    <property type="entry name" value="Proteasome_activ_sf"/>
</dbReference>
<dbReference type="PANTHER" id="PTHR10660:SF2">
    <property type="entry name" value="LD45860P"/>
    <property type="match status" value="1"/>
</dbReference>
<dbReference type="PANTHER" id="PTHR10660">
    <property type="entry name" value="PROTEASOME REGULATOR PA28"/>
    <property type="match status" value="1"/>
</dbReference>
<dbReference type="Pfam" id="PF02252">
    <property type="entry name" value="PA28_C"/>
    <property type="match status" value="1"/>
</dbReference>
<dbReference type="SUPFAM" id="SSF47216">
    <property type="entry name" value="Proteasome activator"/>
    <property type="match status" value="1"/>
</dbReference>
<feature type="chain" id="PRO_0000327679" description="Proteasome activator 28">
    <location>
        <begin position="1"/>
        <end position="225"/>
    </location>
</feature>